<comment type="function">
    <text evidence="4">Probable ion channel inhibitor.</text>
</comment>
<comment type="subcellular location">
    <subcellularLocation>
        <location evidence="2">Secreted</location>
    </subcellularLocation>
</comment>
<comment type="tissue specificity">
    <text evidence="5">Expressed by the venom gland.</text>
</comment>
<comment type="domain">
    <text evidence="4">The presence of a 'disulfide through disulfide knot' structurally defines this protein as a knottin.</text>
</comment>
<comment type="similarity">
    <text evidence="4">Belongs to the neurotoxin 14 (magi-1) family. 08 (Ltx-4) subfamily.</text>
</comment>
<sequence>MNTLIAFAVLLLLSTTLGDTDDKVSHEEIQERKELSGISEELLLQQLEAVEAALMEKERLEEMEEDGNSREKRCMALNVPCDSHFKCCKNLVCQDPTLTWFYGSKYCYRKKS</sequence>
<organism evidence="6">
    <name type="scientific">Hadronyche infensa</name>
    <name type="common">Fraser island funnel-web spider</name>
    <name type="synonym">Atrax infensus</name>
    <dbReference type="NCBI Taxonomy" id="153481"/>
    <lineage>
        <taxon>Eukaryota</taxon>
        <taxon>Metazoa</taxon>
        <taxon>Ecdysozoa</taxon>
        <taxon>Arthropoda</taxon>
        <taxon>Chelicerata</taxon>
        <taxon>Arachnida</taxon>
        <taxon>Araneae</taxon>
        <taxon>Mygalomorphae</taxon>
        <taxon>Hexathelidae</taxon>
        <taxon>Hadronyche</taxon>
    </lineage>
</organism>
<keyword id="KW-0165">Cleavage on pair of basic residues</keyword>
<keyword id="KW-1015">Disulfide bond</keyword>
<keyword id="KW-0872">Ion channel impairing toxin</keyword>
<keyword id="KW-0964">Secreted</keyword>
<keyword id="KW-0732">Signal</keyword>
<keyword id="KW-0800">Toxin</keyword>
<dbReference type="EMBL" id="HACE01000006">
    <property type="protein sequence ID" value="CDZ18790.1"/>
    <property type="molecule type" value="mRNA"/>
</dbReference>
<dbReference type="EMBL" id="HACE01000009">
    <property type="protein sequence ID" value="CDZ18793.1"/>
    <property type="molecule type" value="mRNA"/>
</dbReference>
<dbReference type="EMBL" id="HACE01000013">
    <property type="protein sequence ID" value="CDZ18797.1"/>
    <property type="molecule type" value="mRNA"/>
</dbReference>
<dbReference type="EMBL" id="HACE01000028">
    <property type="protein sequence ID" value="CDZ18812.1"/>
    <property type="molecule type" value="mRNA"/>
</dbReference>
<dbReference type="EMBL" id="HACE01000057">
    <property type="protein sequence ID" value="CDZ18841.1"/>
    <property type="molecule type" value="mRNA"/>
</dbReference>
<dbReference type="EMBL" id="HACE01000119">
    <property type="protein sequence ID" value="CDZ18903.1"/>
    <property type="molecule type" value="mRNA"/>
</dbReference>
<dbReference type="EMBL" id="HACE01000109">
    <property type="protein sequence ID" value="CDZ18893.1"/>
    <property type="molecule type" value="mRNA"/>
</dbReference>
<dbReference type="GO" id="GO:0005576">
    <property type="term" value="C:extracellular region"/>
    <property type="evidence" value="ECO:0007669"/>
    <property type="project" value="UniProtKB-SubCell"/>
</dbReference>
<dbReference type="GO" id="GO:0019871">
    <property type="term" value="F:sodium channel inhibitor activity"/>
    <property type="evidence" value="ECO:0007669"/>
    <property type="project" value="InterPro"/>
</dbReference>
<dbReference type="GO" id="GO:0090729">
    <property type="term" value="F:toxin activity"/>
    <property type="evidence" value="ECO:0007669"/>
    <property type="project" value="UniProtKB-KW"/>
</dbReference>
<dbReference type="InterPro" id="IPR012627">
    <property type="entry name" value="Toxin_22"/>
</dbReference>
<dbReference type="Pfam" id="PF08092">
    <property type="entry name" value="Toxin_22"/>
    <property type="match status" value="1"/>
</dbReference>
<reference key="1">
    <citation type="journal article" date="2020" name="Proc. Natl. Acad. Sci. U.S.A.">
        <title>Structural venomics reveals evolution of a complex venom by duplication and diversification of an ancient peptide-encoding gene.</title>
        <authorList>
            <person name="Pineda S.S."/>
            <person name="Chin Y.K."/>
            <person name="Undheim E.A.B."/>
            <person name="Senff S."/>
            <person name="Mobli M."/>
            <person name="Dauly C."/>
            <person name="Escoubas P."/>
            <person name="Nicholson G.M."/>
            <person name="Kaas Q."/>
            <person name="Guo S."/>
            <person name="Herzig V."/>
            <person name="Mattick J.S."/>
            <person name="King G.F."/>
        </authorList>
    </citation>
    <scope>NUCLEOTIDE SEQUENCE [MRNA]</scope>
    <scope>IDENTIFICATION BY MASS SPECTROMETRY</scope>
    <scope>SUBCELLULAR LOCATION</scope>
    <source>
        <tissue>Venom</tissue>
        <tissue>Venom gland</tissue>
    </source>
</reference>
<reference evidence="6" key="2">
    <citation type="thesis" date="2012" institute="The University of Queensland" country="Australia">
        <title>Probing the chemical diversity of venom from the Australian Funnel-web spider Hadronyche infensa.</title>
        <authorList>
            <person name="Pineda S.S."/>
        </authorList>
    </citation>
    <scope>NUCLEOTIDE SEQUENCE [MRNA]</scope>
    <source>
        <tissue>Venom gland</tissue>
    </source>
</reference>
<reference evidence="6" key="3">
    <citation type="submission" date="2014-07" db="EMBL/GenBank/DDBJ databases">
        <authorList>
            <person name="Zhang J.E."/>
            <person name="Yang H."/>
            <person name="Guo J."/>
            <person name="Deng Z."/>
            <person name="Luo H."/>
            <person name="Luo M."/>
            <person name="Zhao B."/>
        </authorList>
    </citation>
    <scope>NUCLEOTIDE SEQUENCE [MRNA]</scope>
    <source>
        <tissue>Venom gland</tissue>
    </source>
</reference>
<feature type="signal peptide" evidence="1">
    <location>
        <begin position="1"/>
        <end position="18"/>
    </location>
</feature>
<feature type="propeptide" id="PRO_0000459677" evidence="5">
    <location>
        <begin position="19"/>
        <end position="73"/>
    </location>
</feature>
<feature type="chain" id="PRO_5014266703" description="U15-hexatoxin-Hi1a" evidence="5">
    <location>
        <begin position="74"/>
        <end position="112"/>
    </location>
</feature>
<feature type="disulfide bond" evidence="4">
    <location>
        <begin position="74"/>
        <end position="88"/>
    </location>
</feature>
<feature type="disulfide bond" evidence="4">
    <location>
        <begin position="81"/>
        <end position="93"/>
    </location>
</feature>
<feature type="disulfide bond" evidence="4">
    <location>
        <begin position="87"/>
        <end position="107"/>
    </location>
</feature>
<proteinExistence type="evidence at protein level"/>
<name>TF1A_HADIN</name>
<protein>
    <recommendedName>
        <fullName evidence="3">U15-hexatoxin-Hi1a</fullName>
        <shortName evidence="3">U15-HXTX-Hi1a</shortName>
    </recommendedName>
    <alternativeName>
        <fullName evidence="3">SF20 peptide</fullName>
    </alternativeName>
</protein>
<accession>A0A1D0BZZ2</accession>
<accession>A0A1D0BZI7</accession>
<evidence type="ECO:0000255" key="1"/>
<evidence type="ECO:0000269" key="2">
    <source>
    </source>
</evidence>
<evidence type="ECO:0000303" key="3">
    <source>
    </source>
</evidence>
<evidence type="ECO:0000305" key="4"/>
<evidence type="ECO:0000305" key="5">
    <source>
    </source>
</evidence>
<evidence type="ECO:0000312" key="6">
    <source>
        <dbReference type="EMBL" id="CDZ18841.1"/>
    </source>
</evidence>